<organism>
    <name type="scientific">Mycobacterium leprae (strain TN)</name>
    <dbReference type="NCBI Taxonomy" id="272631"/>
    <lineage>
        <taxon>Bacteria</taxon>
        <taxon>Bacillati</taxon>
        <taxon>Actinomycetota</taxon>
        <taxon>Actinomycetes</taxon>
        <taxon>Mycobacteriales</taxon>
        <taxon>Mycobacteriaceae</taxon>
        <taxon>Mycobacterium</taxon>
    </lineage>
</organism>
<reference key="1">
    <citation type="journal article" date="2001" name="Nature">
        <title>Massive gene decay in the leprosy bacillus.</title>
        <authorList>
            <person name="Cole S.T."/>
            <person name="Eiglmeier K."/>
            <person name="Parkhill J."/>
            <person name="James K.D."/>
            <person name="Thomson N.R."/>
            <person name="Wheeler P.R."/>
            <person name="Honore N."/>
            <person name="Garnier T."/>
            <person name="Churcher C.M."/>
            <person name="Harris D.E."/>
            <person name="Mungall K.L."/>
            <person name="Basham D."/>
            <person name="Brown D."/>
            <person name="Chillingworth T."/>
            <person name="Connor R."/>
            <person name="Davies R.M."/>
            <person name="Devlin K."/>
            <person name="Duthoy S."/>
            <person name="Feltwell T."/>
            <person name="Fraser A."/>
            <person name="Hamlin N."/>
            <person name="Holroyd S."/>
            <person name="Hornsby T."/>
            <person name="Jagels K."/>
            <person name="Lacroix C."/>
            <person name="Maclean J."/>
            <person name="Moule S."/>
            <person name="Murphy L.D."/>
            <person name="Oliver K."/>
            <person name="Quail M.A."/>
            <person name="Rajandream M.A."/>
            <person name="Rutherford K.M."/>
            <person name="Rutter S."/>
            <person name="Seeger K."/>
            <person name="Simon S."/>
            <person name="Simmonds M."/>
            <person name="Skelton J."/>
            <person name="Squares R."/>
            <person name="Squares S."/>
            <person name="Stevens K."/>
            <person name="Taylor K."/>
            <person name="Whitehead S."/>
            <person name="Woodward J.R."/>
            <person name="Barrell B.G."/>
        </authorList>
    </citation>
    <scope>NUCLEOTIDE SEQUENCE [LARGE SCALE GENOMIC DNA]</scope>
    <source>
        <strain>TN</strain>
    </source>
</reference>
<evidence type="ECO:0000255" key="1">
    <source>
        <dbReference type="HAMAP-Rule" id="MF_01326"/>
    </source>
</evidence>
<evidence type="ECO:0000305" key="2"/>
<comment type="function">
    <text evidence="1">One of two assembly initiator proteins, it binds directly to the 5'-end of the 23S rRNA, where it nucleates assembly of the 50S subunit.</text>
</comment>
<comment type="function">
    <text evidence="1">One of the proteins that surrounds the polypeptide exit tunnel on the outside of the subunit.</text>
</comment>
<comment type="subunit">
    <text evidence="1">Part of the 50S ribosomal subunit.</text>
</comment>
<comment type="similarity">
    <text evidence="1">Belongs to the universal ribosomal protein uL24 family.</text>
</comment>
<keyword id="KW-1185">Reference proteome</keyword>
<keyword id="KW-0687">Ribonucleoprotein</keyword>
<keyword id="KW-0689">Ribosomal protein</keyword>
<keyword id="KW-0694">RNA-binding</keyword>
<keyword id="KW-0699">rRNA-binding</keyword>
<name>RL24_MYCLE</name>
<dbReference type="EMBL" id="Z98756">
    <property type="protein sequence ID" value="CAB11447.1"/>
    <property type="molecule type" value="Genomic_DNA"/>
</dbReference>
<dbReference type="EMBL" id="AL583923">
    <property type="protein sequence ID" value="CAC30802.1"/>
    <property type="molecule type" value="Genomic_DNA"/>
</dbReference>
<dbReference type="PIR" id="T45377">
    <property type="entry name" value="T45377"/>
</dbReference>
<dbReference type="RefSeq" id="NP_302254.1">
    <property type="nucleotide sequence ID" value="NC_002677.1"/>
</dbReference>
<dbReference type="RefSeq" id="WP_010908575.1">
    <property type="nucleotide sequence ID" value="NC_002677.1"/>
</dbReference>
<dbReference type="SMR" id="O32994"/>
<dbReference type="STRING" id="272631.gene:17575696"/>
<dbReference type="KEGG" id="mle:ML1848"/>
<dbReference type="PATRIC" id="fig|272631.5.peg.3498"/>
<dbReference type="Leproma" id="ML1848"/>
<dbReference type="eggNOG" id="COG0198">
    <property type="taxonomic scope" value="Bacteria"/>
</dbReference>
<dbReference type="HOGENOM" id="CLU_093315_2_0_11"/>
<dbReference type="OrthoDB" id="9807419at2"/>
<dbReference type="Proteomes" id="UP000000806">
    <property type="component" value="Chromosome"/>
</dbReference>
<dbReference type="GO" id="GO:1990904">
    <property type="term" value="C:ribonucleoprotein complex"/>
    <property type="evidence" value="ECO:0007669"/>
    <property type="project" value="UniProtKB-KW"/>
</dbReference>
<dbReference type="GO" id="GO:0005840">
    <property type="term" value="C:ribosome"/>
    <property type="evidence" value="ECO:0007669"/>
    <property type="project" value="UniProtKB-KW"/>
</dbReference>
<dbReference type="GO" id="GO:0019843">
    <property type="term" value="F:rRNA binding"/>
    <property type="evidence" value="ECO:0007669"/>
    <property type="project" value="UniProtKB-UniRule"/>
</dbReference>
<dbReference type="GO" id="GO:0003735">
    <property type="term" value="F:structural constituent of ribosome"/>
    <property type="evidence" value="ECO:0007669"/>
    <property type="project" value="InterPro"/>
</dbReference>
<dbReference type="GO" id="GO:0006412">
    <property type="term" value="P:translation"/>
    <property type="evidence" value="ECO:0007669"/>
    <property type="project" value="UniProtKB-UniRule"/>
</dbReference>
<dbReference type="CDD" id="cd06089">
    <property type="entry name" value="KOW_RPL26"/>
    <property type="match status" value="1"/>
</dbReference>
<dbReference type="FunFam" id="2.30.30.30:FF:000004">
    <property type="entry name" value="50S ribosomal protein L24"/>
    <property type="match status" value="1"/>
</dbReference>
<dbReference type="Gene3D" id="2.30.30.30">
    <property type="match status" value="1"/>
</dbReference>
<dbReference type="HAMAP" id="MF_01326_B">
    <property type="entry name" value="Ribosomal_uL24_B"/>
    <property type="match status" value="1"/>
</dbReference>
<dbReference type="InterPro" id="IPR005824">
    <property type="entry name" value="KOW"/>
</dbReference>
<dbReference type="InterPro" id="IPR014722">
    <property type="entry name" value="Rib_uL2_dom2"/>
</dbReference>
<dbReference type="InterPro" id="IPR003256">
    <property type="entry name" value="Ribosomal_uL24"/>
</dbReference>
<dbReference type="InterPro" id="IPR005825">
    <property type="entry name" value="Ribosomal_uL24_CS"/>
</dbReference>
<dbReference type="InterPro" id="IPR041988">
    <property type="entry name" value="Ribosomal_uL24_KOW"/>
</dbReference>
<dbReference type="InterPro" id="IPR008991">
    <property type="entry name" value="Translation_prot_SH3-like_sf"/>
</dbReference>
<dbReference type="NCBIfam" id="TIGR01079">
    <property type="entry name" value="rplX_bact"/>
    <property type="match status" value="1"/>
</dbReference>
<dbReference type="PANTHER" id="PTHR12903">
    <property type="entry name" value="MITOCHONDRIAL RIBOSOMAL PROTEIN L24"/>
    <property type="match status" value="1"/>
</dbReference>
<dbReference type="Pfam" id="PF00467">
    <property type="entry name" value="KOW"/>
    <property type="match status" value="1"/>
</dbReference>
<dbReference type="Pfam" id="PF17136">
    <property type="entry name" value="ribosomal_L24"/>
    <property type="match status" value="1"/>
</dbReference>
<dbReference type="SMART" id="SM00739">
    <property type="entry name" value="KOW"/>
    <property type="match status" value="1"/>
</dbReference>
<dbReference type="SUPFAM" id="SSF50104">
    <property type="entry name" value="Translation proteins SH3-like domain"/>
    <property type="match status" value="1"/>
</dbReference>
<dbReference type="PROSITE" id="PS01108">
    <property type="entry name" value="RIBOSOMAL_L24"/>
    <property type="match status" value="1"/>
</dbReference>
<gene>
    <name evidence="1" type="primary">rplX</name>
    <name type="ordered locus">ML1848</name>
    <name type="ORF">MLCB2492.15</name>
</gene>
<proteinExistence type="inferred from homology"/>
<accession>O32994</accession>
<sequence>MKVHKGDTVLVIAGKDKGAKGKVLQAYPARNRVLVEGVNRIKKHTAISANQRGAQAGGIVTQEAPIHVSNVMVVDSDGKPTRIGYRVDEETDKRVRISKRNGKDI</sequence>
<feature type="chain" id="PRO_0000130679" description="Large ribosomal subunit protein uL24">
    <location>
        <begin position="1"/>
        <end position="105"/>
    </location>
</feature>
<protein>
    <recommendedName>
        <fullName evidence="1">Large ribosomal subunit protein uL24</fullName>
    </recommendedName>
    <alternativeName>
        <fullName evidence="2">50S ribosomal protein L24</fullName>
    </alternativeName>
</protein>